<feature type="chain" id="PRO_0000306581" description="Small ribosomal subunit protein uS13">
    <location>
        <begin position="1"/>
        <end position="122"/>
    </location>
</feature>
<feature type="region of interest" description="Disordered" evidence="2">
    <location>
        <begin position="98"/>
        <end position="122"/>
    </location>
</feature>
<feature type="compositionally biased region" description="Basic residues" evidence="2">
    <location>
        <begin position="98"/>
        <end position="116"/>
    </location>
</feature>
<proteinExistence type="inferred from homology"/>
<comment type="function">
    <text evidence="1">Located at the top of the head of the 30S subunit, it contacts several helices of the 16S rRNA. In the 70S ribosome it contacts the 23S rRNA (bridge B1a) and protein L5 of the 50S subunit (bridge B1b), connecting the 2 subunits; these bridges are implicated in subunit movement. Contacts the tRNAs in the A and P-sites.</text>
</comment>
<comment type="subunit">
    <text evidence="1">Part of the 30S ribosomal subunit. Forms a loose heterodimer with protein S19. Forms two bridges to the 50S subunit in the 70S ribosome.</text>
</comment>
<comment type="similarity">
    <text evidence="1">Belongs to the universal ribosomal protein uS13 family.</text>
</comment>
<evidence type="ECO:0000255" key="1">
    <source>
        <dbReference type="HAMAP-Rule" id="MF_01315"/>
    </source>
</evidence>
<evidence type="ECO:0000256" key="2">
    <source>
        <dbReference type="SAM" id="MobiDB-lite"/>
    </source>
</evidence>
<evidence type="ECO:0000305" key="3"/>
<reference key="1">
    <citation type="submission" date="2006-11" db="EMBL/GenBank/DDBJ databases">
        <title>Sequence of Campylobacter fetus subsp. fetus 82-40.</title>
        <authorList>
            <person name="Fouts D.E."/>
            <person name="Nelson K.E."/>
        </authorList>
    </citation>
    <scope>NUCLEOTIDE SEQUENCE [LARGE SCALE GENOMIC DNA]</scope>
    <source>
        <strain>82-40</strain>
    </source>
</reference>
<dbReference type="EMBL" id="CP000487">
    <property type="protein sequence ID" value="ABK83100.1"/>
    <property type="molecule type" value="Genomic_DNA"/>
</dbReference>
<dbReference type="RefSeq" id="WP_002848033.1">
    <property type="nucleotide sequence ID" value="NC_008599.1"/>
</dbReference>
<dbReference type="SMR" id="A0RM33"/>
<dbReference type="GeneID" id="61063900"/>
<dbReference type="KEGG" id="cff:CFF8240_0056"/>
<dbReference type="eggNOG" id="COG0099">
    <property type="taxonomic scope" value="Bacteria"/>
</dbReference>
<dbReference type="HOGENOM" id="CLU_103849_1_2_7"/>
<dbReference type="Proteomes" id="UP000000760">
    <property type="component" value="Chromosome"/>
</dbReference>
<dbReference type="GO" id="GO:0005829">
    <property type="term" value="C:cytosol"/>
    <property type="evidence" value="ECO:0007669"/>
    <property type="project" value="TreeGrafter"/>
</dbReference>
<dbReference type="GO" id="GO:0015935">
    <property type="term" value="C:small ribosomal subunit"/>
    <property type="evidence" value="ECO:0007669"/>
    <property type="project" value="TreeGrafter"/>
</dbReference>
<dbReference type="GO" id="GO:0019843">
    <property type="term" value="F:rRNA binding"/>
    <property type="evidence" value="ECO:0007669"/>
    <property type="project" value="UniProtKB-UniRule"/>
</dbReference>
<dbReference type="GO" id="GO:0003735">
    <property type="term" value="F:structural constituent of ribosome"/>
    <property type="evidence" value="ECO:0007669"/>
    <property type="project" value="InterPro"/>
</dbReference>
<dbReference type="GO" id="GO:0000049">
    <property type="term" value="F:tRNA binding"/>
    <property type="evidence" value="ECO:0007669"/>
    <property type="project" value="UniProtKB-UniRule"/>
</dbReference>
<dbReference type="GO" id="GO:0006412">
    <property type="term" value="P:translation"/>
    <property type="evidence" value="ECO:0007669"/>
    <property type="project" value="UniProtKB-UniRule"/>
</dbReference>
<dbReference type="FunFam" id="1.10.8.50:FF:000001">
    <property type="entry name" value="30S ribosomal protein S13"/>
    <property type="match status" value="1"/>
</dbReference>
<dbReference type="FunFam" id="4.10.910.10:FF:000001">
    <property type="entry name" value="30S ribosomal protein S13"/>
    <property type="match status" value="1"/>
</dbReference>
<dbReference type="Gene3D" id="1.10.8.50">
    <property type="match status" value="1"/>
</dbReference>
<dbReference type="Gene3D" id="4.10.910.10">
    <property type="entry name" value="30s ribosomal protein s13, domain 2"/>
    <property type="match status" value="1"/>
</dbReference>
<dbReference type="HAMAP" id="MF_01315">
    <property type="entry name" value="Ribosomal_uS13"/>
    <property type="match status" value="1"/>
</dbReference>
<dbReference type="InterPro" id="IPR027437">
    <property type="entry name" value="Rbsml_uS13_C"/>
</dbReference>
<dbReference type="InterPro" id="IPR001892">
    <property type="entry name" value="Ribosomal_uS13"/>
</dbReference>
<dbReference type="InterPro" id="IPR010979">
    <property type="entry name" value="Ribosomal_uS13-like_H2TH"/>
</dbReference>
<dbReference type="InterPro" id="IPR019980">
    <property type="entry name" value="Ribosomal_uS13_bac-type"/>
</dbReference>
<dbReference type="InterPro" id="IPR018269">
    <property type="entry name" value="Ribosomal_uS13_CS"/>
</dbReference>
<dbReference type="NCBIfam" id="TIGR03631">
    <property type="entry name" value="uS13_bact"/>
    <property type="match status" value="1"/>
</dbReference>
<dbReference type="PANTHER" id="PTHR10871">
    <property type="entry name" value="30S RIBOSOMAL PROTEIN S13/40S RIBOSOMAL PROTEIN S18"/>
    <property type="match status" value="1"/>
</dbReference>
<dbReference type="PANTHER" id="PTHR10871:SF1">
    <property type="entry name" value="SMALL RIBOSOMAL SUBUNIT PROTEIN US13M"/>
    <property type="match status" value="1"/>
</dbReference>
<dbReference type="Pfam" id="PF00416">
    <property type="entry name" value="Ribosomal_S13"/>
    <property type="match status" value="1"/>
</dbReference>
<dbReference type="PIRSF" id="PIRSF002134">
    <property type="entry name" value="Ribosomal_S13"/>
    <property type="match status" value="1"/>
</dbReference>
<dbReference type="SUPFAM" id="SSF46946">
    <property type="entry name" value="S13-like H2TH domain"/>
    <property type="match status" value="1"/>
</dbReference>
<dbReference type="PROSITE" id="PS00646">
    <property type="entry name" value="RIBOSOMAL_S13_1"/>
    <property type="match status" value="1"/>
</dbReference>
<dbReference type="PROSITE" id="PS50159">
    <property type="entry name" value="RIBOSOMAL_S13_2"/>
    <property type="match status" value="1"/>
</dbReference>
<organism>
    <name type="scientific">Campylobacter fetus subsp. fetus (strain 82-40)</name>
    <dbReference type="NCBI Taxonomy" id="360106"/>
    <lineage>
        <taxon>Bacteria</taxon>
        <taxon>Pseudomonadati</taxon>
        <taxon>Campylobacterota</taxon>
        <taxon>Epsilonproteobacteria</taxon>
        <taxon>Campylobacterales</taxon>
        <taxon>Campylobacteraceae</taxon>
        <taxon>Campylobacter</taxon>
    </lineage>
</organism>
<keyword id="KW-0687">Ribonucleoprotein</keyword>
<keyword id="KW-0689">Ribosomal protein</keyword>
<keyword id="KW-0694">RNA-binding</keyword>
<keyword id="KW-0699">rRNA-binding</keyword>
<keyword id="KW-0820">tRNA-binding</keyword>
<name>RS13_CAMFF</name>
<accession>A0RM33</accession>
<gene>
    <name evidence="1" type="primary">rpsM</name>
    <name type="ordered locus">CFF8240_0056</name>
</gene>
<sequence length="122" mass="13800">MARIAGVDLPKKKRVEYGLTYIYGIGLFTSRKILNAVGISYDKRVYELSEDEAAAIRKEIQEHYMVEGDLRKSVAMDIKALMDLGSYRGLRHRKGLPVRGQKTKTNARTRKGRRKTVGAATK</sequence>
<protein>
    <recommendedName>
        <fullName evidence="1">Small ribosomal subunit protein uS13</fullName>
    </recommendedName>
    <alternativeName>
        <fullName evidence="3">30S ribosomal protein S13</fullName>
    </alternativeName>
</protein>